<comment type="function">
    <text evidence="1">Catalyzes the condensation of iminoaspartate with dihydroxyacetone phosphate to form quinolinate.</text>
</comment>
<comment type="catalytic activity">
    <reaction evidence="1">
        <text>iminosuccinate + dihydroxyacetone phosphate = quinolinate + phosphate + 2 H2O + H(+)</text>
        <dbReference type="Rhea" id="RHEA:25888"/>
        <dbReference type="ChEBI" id="CHEBI:15377"/>
        <dbReference type="ChEBI" id="CHEBI:15378"/>
        <dbReference type="ChEBI" id="CHEBI:29959"/>
        <dbReference type="ChEBI" id="CHEBI:43474"/>
        <dbReference type="ChEBI" id="CHEBI:57642"/>
        <dbReference type="ChEBI" id="CHEBI:77875"/>
        <dbReference type="EC" id="2.5.1.72"/>
    </reaction>
    <physiologicalReaction direction="left-to-right" evidence="1">
        <dbReference type="Rhea" id="RHEA:25889"/>
    </physiologicalReaction>
</comment>
<comment type="cofactor">
    <cofactor evidence="1">
        <name>[4Fe-4S] cluster</name>
        <dbReference type="ChEBI" id="CHEBI:49883"/>
    </cofactor>
    <text evidence="1">Binds 1 [4Fe-4S] cluster per subunit.</text>
</comment>
<comment type="pathway">
    <text evidence="1">Cofactor biosynthesis; NAD(+) biosynthesis; quinolinate from iminoaspartate: step 1/1.</text>
</comment>
<comment type="subcellular location">
    <subcellularLocation>
        <location evidence="1">Cytoplasm</location>
    </subcellularLocation>
</comment>
<comment type="similarity">
    <text evidence="1">Belongs to the quinolinate synthase family. Type 2 subfamily.</text>
</comment>
<evidence type="ECO:0000255" key="1">
    <source>
        <dbReference type="HAMAP-Rule" id="MF_00568"/>
    </source>
</evidence>
<reference key="1">
    <citation type="journal article" date="2011" name="MBio">
        <title>Novel metabolic attributes of the genus Cyanothece, comprising a group of unicellular nitrogen-fixing Cyanobacteria.</title>
        <authorList>
            <person name="Bandyopadhyay A."/>
            <person name="Elvitigala T."/>
            <person name="Welsh E."/>
            <person name="Stockel J."/>
            <person name="Liberton M."/>
            <person name="Min H."/>
            <person name="Sherman L.A."/>
            <person name="Pakrasi H.B."/>
        </authorList>
    </citation>
    <scope>NUCLEOTIDE SEQUENCE [LARGE SCALE GENOMIC DNA]</scope>
    <source>
        <strain>PCC 8801 / RF-1</strain>
    </source>
</reference>
<feature type="chain" id="PRO_1000129436" description="Quinolinate synthase">
    <location>
        <begin position="1"/>
        <end position="325"/>
    </location>
</feature>
<feature type="binding site" evidence="1">
    <location>
        <position position="41"/>
    </location>
    <ligand>
        <name>iminosuccinate</name>
        <dbReference type="ChEBI" id="CHEBI:77875"/>
    </ligand>
</feature>
<feature type="binding site" evidence="1">
    <location>
        <position position="58"/>
    </location>
    <ligand>
        <name>iminosuccinate</name>
        <dbReference type="ChEBI" id="CHEBI:77875"/>
    </ligand>
</feature>
<feature type="binding site" evidence="1">
    <location>
        <position position="103"/>
    </location>
    <ligand>
        <name>[4Fe-4S] cluster</name>
        <dbReference type="ChEBI" id="CHEBI:49883"/>
    </ligand>
</feature>
<feature type="binding site" evidence="1">
    <location>
        <begin position="129"/>
        <end position="131"/>
    </location>
    <ligand>
        <name>iminosuccinate</name>
        <dbReference type="ChEBI" id="CHEBI:77875"/>
    </ligand>
</feature>
<feature type="binding site" evidence="1">
    <location>
        <position position="146"/>
    </location>
    <ligand>
        <name>iminosuccinate</name>
        <dbReference type="ChEBI" id="CHEBI:77875"/>
    </ligand>
</feature>
<feature type="binding site" evidence="1">
    <location>
        <position position="189"/>
    </location>
    <ligand>
        <name>[4Fe-4S] cluster</name>
        <dbReference type="ChEBI" id="CHEBI:49883"/>
    </ligand>
</feature>
<feature type="binding site" evidence="1">
    <location>
        <begin position="215"/>
        <end position="217"/>
    </location>
    <ligand>
        <name>iminosuccinate</name>
        <dbReference type="ChEBI" id="CHEBI:77875"/>
    </ligand>
</feature>
<feature type="binding site" evidence="1">
    <location>
        <position position="232"/>
    </location>
    <ligand>
        <name>iminosuccinate</name>
        <dbReference type="ChEBI" id="CHEBI:77875"/>
    </ligand>
</feature>
<feature type="binding site" evidence="1">
    <location>
        <position position="282"/>
    </location>
    <ligand>
        <name>[4Fe-4S] cluster</name>
        <dbReference type="ChEBI" id="CHEBI:49883"/>
    </ligand>
</feature>
<protein>
    <recommendedName>
        <fullName evidence="1">Quinolinate synthase</fullName>
        <ecNumber evidence="1">2.5.1.72</ecNumber>
    </recommendedName>
</protein>
<name>NADA_RIPO1</name>
<sequence>MFTTVRPQSTLTPPTANLIPNDLFTAINELKKDLNAVILAHYYQDPDIQDIADFIGDSLALSQQAASTNAEVIVFAGVHFMAETAKILNPDKLVLLPDLNAGCSLADSCPPEAFAQFKAQYPGCLVVSYINCTAEIKAMSDIICTSSNAVKIVNQLPKDRPIIFAPDRNLGRYVMEQTRRELILWQGSCMVHETFSEKKIVQLKIEYPEAEIIAHPECEPSVLRHANYIGSTTALLNYSQQSASQIFIVATEPGIIHQMEKETPHKRFIPAPAINNCACNECPHMRLNTLEKLYLAMKFKQPEITMDETIRLAALRPIQRMLEMS</sequence>
<keyword id="KW-0004">4Fe-4S</keyword>
<keyword id="KW-0963">Cytoplasm</keyword>
<keyword id="KW-0408">Iron</keyword>
<keyword id="KW-0411">Iron-sulfur</keyword>
<keyword id="KW-0479">Metal-binding</keyword>
<keyword id="KW-0662">Pyridine nucleotide biosynthesis</keyword>
<keyword id="KW-1185">Reference proteome</keyword>
<keyword id="KW-0808">Transferase</keyword>
<gene>
    <name evidence="1" type="primary">nadA</name>
    <name type="ordered locus">PCC8801_0787</name>
</gene>
<organism>
    <name type="scientific">Rippkaea orientalis (strain PCC 8801 / RF-1)</name>
    <name type="common">Cyanothece sp. (strain PCC 8801)</name>
    <dbReference type="NCBI Taxonomy" id="41431"/>
    <lineage>
        <taxon>Bacteria</taxon>
        <taxon>Bacillati</taxon>
        <taxon>Cyanobacteriota</taxon>
        <taxon>Cyanophyceae</taxon>
        <taxon>Oscillatoriophycideae</taxon>
        <taxon>Chroococcales</taxon>
        <taxon>Aphanothecaceae</taxon>
        <taxon>Rippkaea</taxon>
        <taxon>Rippkaea orientalis</taxon>
    </lineage>
</organism>
<accession>B7JYJ9</accession>
<dbReference type="EC" id="2.5.1.72" evidence="1"/>
<dbReference type="EMBL" id="CP001287">
    <property type="protein sequence ID" value="ACK64869.1"/>
    <property type="molecule type" value="Genomic_DNA"/>
</dbReference>
<dbReference type="RefSeq" id="WP_012594145.1">
    <property type="nucleotide sequence ID" value="NC_011726.1"/>
</dbReference>
<dbReference type="SMR" id="B7JYJ9"/>
<dbReference type="STRING" id="41431.PCC8801_0787"/>
<dbReference type="KEGG" id="cyp:PCC8801_0787"/>
<dbReference type="eggNOG" id="COG0379">
    <property type="taxonomic scope" value="Bacteria"/>
</dbReference>
<dbReference type="HOGENOM" id="CLU_047382_0_0_3"/>
<dbReference type="OrthoDB" id="9801204at2"/>
<dbReference type="UniPathway" id="UPA00253">
    <property type="reaction ID" value="UER00327"/>
</dbReference>
<dbReference type="Proteomes" id="UP000008204">
    <property type="component" value="Chromosome"/>
</dbReference>
<dbReference type="GO" id="GO:0005829">
    <property type="term" value="C:cytosol"/>
    <property type="evidence" value="ECO:0007669"/>
    <property type="project" value="TreeGrafter"/>
</dbReference>
<dbReference type="GO" id="GO:0051539">
    <property type="term" value="F:4 iron, 4 sulfur cluster binding"/>
    <property type="evidence" value="ECO:0007669"/>
    <property type="project" value="UniProtKB-KW"/>
</dbReference>
<dbReference type="GO" id="GO:0046872">
    <property type="term" value="F:metal ion binding"/>
    <property type="evidence" value="ECO:0007669"/>
    <property type="project" value="UniProtKB-KW"/>
</dbReference>
<dbReference type="GO" id="GO:0008987">
    <property type="term" value="F:quinolinate synthetase A activity"/>
    <property type="evidence" value="ECO:0007669"/>
    <property type="project" value="UniProtKB-UniRule"/>
</dbReference>
<dbReference type="GO" id="GO:0034628">
    <property type="term" value="P:'de novo' NAD biosynthetic process from L-aspartate"/>
    <property type="evidence" value="ECO:0007669"/>
    <property type="project" value="TreeGrafter"/>
</dbReference>
<dbReference type="FunFam" id="3.40.50.10800:FF:000003">
    <property type="entry name" value="Quinolinate synthase A"/>
    <property type="match status" value="1"/>
</dbReference>
<dbReference type="Gene3D" id="3.40.50.10800">
    <property type="entry name" value="NadA-like"/>
    <property type="match status" value="3"/>
</dbReference>
<dbReference type="HAMAP" id="MF_00568">
    <property type="entry name" value="NadA_type2"/>
    <property type="match status" value="1"/>
</dbReference>
<dbReference type="InterPro" id="IPR003473">
    <property type="entry name" value="NadA"/>
</dbReference>
<dbReference type="InterPro" id="IPR036094">
    <property type="entry name" value="NadA_sf"/>
</dbReference>
<dbReference type="InterPro" id="IPR023066">
    <property type="entry name" value="Quinolinate_synth_type2"/>
</dbReference>
<dbReference type="NCBIfam" id="TIGR00550">
    <property type="entry name" value="nadA"/>
    <property type="match status" value="1"/>
</dbReference>
<dbReference type="NCBIfam" id="NF006878">
    <property type="entry name" value="PRK09375.1-2"/>
    <property type="match status" value="1"/>
</dbReference>
<dbReference type="NCBIfam" id="NF006879">
    <property type="entry name" value="PRK09375.1-4"/>
    <property type="match status" value="1"/>
</dbReference>
<dbReference type="PANTHER" id="PTHR30573:SF0">
    <property type="entry name" value="QUINOLINATE SYNTHASE, CHLOROPLASTIC"/>
    <property type="match status" value="1"/>
</dbReference>
<dbReference type="PANTHER" id="PTHR30573">
    <property type="entry name" value="QUINOLINATE SYNTHETASE A"/>
    <property type="match status" value="1"/>
</dbReference>
<dbReference type="Pfam" id="PF02445">
    <property type="entry name" value="NadA"/>
    <property type="match status" value="1"/>
</dbReference>
<dbReference type="SUPFAM" id="SSF142754">
    <property type="entry name" value="NadA-like"/>
    <property type="match status" value="1"/>
</dbReference>
<proteinExistence type="inferred from homology"/>